<accession>A0A0F6QDA5</accession>
<evidence type="ECO:0000250" key="1">
    <source>
        <dbReference type="UniProtKB" id="P0DL67"/>
    </source>
</evidence>
<evidence type="ECO:0000250" key="2">
    <source>
        <dbReference type="UniProtKB" id="P60513"/>
    </source>
</evidence>
<evidence type="ECO:0000269" key="3">
    <source>
    </source>
</evidence>
<evidence type="ECO:0000303" key="4">
    <source>
    </source>
</evidence>
<evidence type="ECO:0000305" key="5"/>
<evidence type="ECO:0000305" key="6">
    <source>
    </source>
</evidence>
<feature type="propeptide" id="PRO_0000439828">
    <location>
        <begin position="1" status="less than"/>
        <end position="4"/>
    </location>
</feature>
<feature type="peptide" id="PRO_0000439829" description="Delta-conotoxin-like ErVIA" evidence="3">
    <location>
        <begin position="5"/>
        <end position="31"/>
    </location>
</feature>
<feature type="disulfide bond" evidence="2">
    <location>
        <begin position="5"/>
        <end position="21"/>
    </location>
</feature>
<feature type="disulfide bond" evidence="2">
    <location>
        <begin position="12"/>
        <end position="25"/>
    </location>
</feature>
<feature type="disulfide bond" evidence="2">
    <location>
        <begin position="20"/>
        <end position="29"/>
    </location>
</feature>
<feature type="non-terminal residue">
    <location>
        <position position="1"/>
    </location>
</feature>
<organism>
    <name type="scientific">Conus eburneus</name>
    <name type="common">Ivory cone</name>
    <dbReference type="NCBI Taxonomy" id="101300"/>
    <lineage>
        <taxon>Eukaryota</taxon>
        <taxon>Metazoa</taxon>
        <taxon>Spiralia</taxon>
        <taxon>Lophotrochozoa</taxon>
        <taxon>Mollusca</taxon>
        <taxon>Gastropoda</taxon>
        <taxon>Caenogastropoda</taxon>
        <taxon>Neogastropoda</taxon>
        <taxon>Conoidea</taxon>
        <taxon>Conidae</taxon>
        <taxon>Conus</taxon>
        <taxon>Tesselliconus</taxon>
    </lineage>
</organism>
<proteinExistence type="evidence at protein level"/>
<comment type="function">
    <text evidence="1">This toxin activates voltage-gated sodium channels. It shifts the voltage-dependence of activation to more hyperpolarized potentials but has only little effect on channel inactivation. It is active on Nav1.3/SCN3A (EC(50)=3.98 nM), Nav1.4/SCN4A (EC(50)=4.99 nM), Nav1.6/SCN8A (EC(50)=1.27 nM) and Nav1.7/SCN9A (EC(50)=2.42 nM) voltage-gated sodium channels. In vivo, it induces nocifensive or pain-like behaviors in mice when injected intraplantarly.</text>
</comment>
<comment type="subcellular location">
    <subcellularLocation>
        <location evidence="3">Secreted</location>
    </subcellularLocation>
</comment>
<comment type="tissue specificity">
    <text evidence="6">Expressed by the venom duct.</text>
</comment>
<comment type="domain">
    <text evidence="5">The cysteine framework is VI/VII (C-C-CC-C-C).</text>
</comment>
<comment type="domain">
    <text evidence="2">The presence of a 'disulfide through disulfide knot' structurally defines this protein as a knottin.</text>
</comment>
<comment type="similarity">
    <text evidence="5">Belongs to the conotoxin O1 superfamily.</text>
</comment>
<name>O16A_CONEB</name>
<reference key="1">
    <citation type="journal article" date="2015" name="Proc. Natl. Acad. Sci. U.S.A.">
        <title>Insights into the origins of fish hunting in venomous cone snails from studies of Conus tessulatus.</title>
        <authorList>
            <person name="Aman J.W."/>
            <person name="Imperial J.S."/>
            <person name="Ueberheide B."/>
            <person name="Zhang M.M."/>
            <person name="Aguilar M."/>
            <person name="Taylor D."/>
            <person name="Watkins M."/>
            <person name="Yoshikami D."/>
            <person name="Showers-Corneli P."/>
            <person name="Safavi-Hemami H."/>
            <person name="Biggs J."/>
            <person name="Teichert R.W."/>
            <person name="Olivera B.M."/>
        </authorList>
    </citation>
    <scope>NUCLEOTIDE SEQUENCE [GENOMIC DNA]</scope>
    <scope>PROTEIN SEQUENCE OF 5-31</scope>
    <scope>IDENTIFICATION BY MASS SPECTROMETRY</scope>
    <scope>SUBCELLULAR LOCATION</scope>
    <source>
        <tissue>Venom</tissue>
    </source>
</reference>
<dbReference type="EMBL" id="KR013220">
    <property type="protein sequence ID" value="AKD43185.1"/>
    <property type="molecule type" value="Genomic_DNA"/>
</dbReference>
<dbReference type="GO" id="GO:0005576">
    <property type="term" value="C:extracellular region"/>
    <property type="evidence" value="ECO:0007669"/>
    <property type="project" value="UniProtKB-SubCell"/>
</dbReference>
<dbReference type="GO" id="GO:0017080">
    <property type="term" value="F:sodium channel regulator activity"/>
    <property type="evidence" value="ECO:0007669"/>
    <property type="project" value="UniProtKB-KW"/>
</dbReference>
<dbReference type="GO" id="GO:0090729">
    <property type="term" value="F:toxin activity"/>
    <property type="evidence" value="ECO:0007669"/>
    <property type="project" value="UniProtKB-KW"/>
</dbReference>
<protein>
    <recommendedName>
        <fullName evidence="4">Delta-conotoxin-like ErVIA</fullName>
    </recommendedName>
</protein>
<sequence>LNKRCAGIGSFCGLPGLVDCCSGRCFIVCLP</sequence>
<keyword id="KW-0165">Cleavage on pair of basic residues</keyword>
<keyword id="KW-0903">Direct protein sequencing</keyword>
<keyword id="KW-1015">Disulfide bond</keyword>
<keyword id="KW-0872">Ion channel impairing toxin</keyword>
<keyword id="KW-0960">Knottin</keyword>
<keyword id="KW-0528">Neurotoxin</keyword>
<keyword id="KW-0964">Secreted</keyword>
<keyword id="KW-0800">Toxin</keyword>
<keyword id="KW-0738">Voltage-gated sodium channel impairing toxin</keyword>